<keyword id="KW-0997">Cell inner membrane</keyword>
<keyword id="KW-1003">Cell membrane</keyword>
<keyword id="KW-0472">Membrane</keyword>
<keyword id="KW-1185">Reference proteome</keyword>
<reference key="1">
    <citation type="submission" date="2006-02" db="EMBL/GenBank/DDBJ databases">
        <title>Complete sequence of chromosome of Jannaschia sp. CCS1.</title>
        <authorList>
            <consortium name="US DOE Joint Genome Institute"/>
            <person name="Copeland A."/>
            <person name="Lucas S."/>
            <person name="Lapidus A."/>
            <person name="Barry K."/>
            <person name="Detter J.C."/>
            <person name="Glavina del Rio T."/>
            <person name="Hammon N."/>
            <person name="Israni S."/>
            <person name="Pitluck S."/>
            <person name="Brettin T."/>
            <person name="Bruce D."/>
            <person name="Han C."/>
            <person name="Tapia R."/>
            <person name="Gilna P."/>
            <person name="Chertkov O."/>
            <person name="Saunders E."/>
            <person name="Schmutz J."/>
            <person name="Larimer F."/>
            <person name="Land M."/>
            <person name="Kyrpides N."/>
            <person name="Lykidis A."/>
            <person name="Moran M.A."/>
            <person name="Belas R."/>
            <person name="Ye W."/>
            <person name="Buchan A."/>
            <person name="Gonzalez J.M."/>
            <person name="Schell M.A."/>
            <person name="Richardson P."/>
        </authorList>
    </citation>
    <scope>NUCLEOTIDE SEQUENCE [LARGE SCALE GENOMIC DNA]</scope>
    <source>
        <strain>CCS1</strain>
    </source>
</reference>
<evidence type="ECO:0000255" key="1">
    <source>
        <dbReference type="HAMAP-Rule" id="MF_00386"/>
    </source>
</evidence>
<dbReference type="EMBL" id="CP000264">
    <property type="protein sequence ID" value="ABD53557.1"/>
    <property type="molecule type" value="Genomic_DNA"/>
</dbReference>
<dbReference type="RefSeq" id="WP_011453765.1">
    <property type="nucleotide sequence ID" value="NC_007802.1"/>
</dbReference>
<dbReference type="STRING" id="290400.Jann_0640"/>
<dbReference type="KEGG" id="jan:Jann_0640"/>
<dbReference type="eggNOG" id="COG0759">
    <property type="taxonomic scope" value="Bacteria"/>
</dbReference>
<dbReference type="HOGENOM" id="CLU_144811_6_1_5"/>
<dbReference type="OrthoDB" id="9801753at2"/>
<dbReference type="Proteomes" id="UP000008326">
    <property type="component" value="Chromosome"/>
</dbReference>
<dbReference type="GO" id="GO:0005886">
    <property type="term" value="C:plasma membrane"/>
    <property type="evidence" value="ECO:0007669"/>
    <property type="project" value="UniProtKB-SubCell"/>
</dbReference>
<dbReference type="HAMAP" id="MF_00386">
    <property type="entry name" value="UPF0161_YidD"/>
    <property type="match status" value="1"/>
</dbReference>
<dbReference type="InterPro" id="IPR002696">
    <property type="entry name" value="Membr_insert_effic_factor_YidD"/>
</dbReference>
<dbReference type="NCBIfam" id="TIGR00278">
    <property type="entry name" value="membrane protein insertion efficiency factor YidD"/>
    <property type="match status" value="1"/>
</dbReference>
<dbReference type="PANTHER" id="PTHR33383">
    <property type="entry name" value="MEMBRANE PROTEIN INSERTION EFFICIENCY FACTOR-RELATED"/>
    <property type="match status" value="1"/>
</dbReference>
<dbReference type="PANTHER" id="PTHR33383:SF1">
    <property type="entry name" value="MEMBRANE PROTEIN INSERTION EFFICIENCY FACTOR-RELATED"/>
    <property type="match status" value="1"/>
</dbReference>
<dbReference type="Pfam" id="PF01809">
    <property type="entry name" value="YidD"/>
    <property type="match status" value="1"/>
</dbReference>
<dbReference type="SMART" id="SM01234">
    <property type="entry name" value="Haemolytic"/>
    <property type="match status" value="1"/>
</dbReference>
<proteinExistence type="inferred from homology"/>
<feature type="chain" id="PRO_0000253115" description="Putative membrane protein insertion efficiency factor">
    <location>
        <begin position="1"/>
        <end position="73"/>
    </location>
</feature>
<accession>Q28UQ5</accession>
<name>YIDD_JANSC</name>
<protein>
    <recommendedName>
        <fullName evidence="1">Putative membrane protein insertion efficiency factor</fullName>
    </recommendedName>
</protein>
<organism>
    <name type="scientific">Jannaschia sp. (strain CCS1)</name>
    <dbReference type="NCBI Taxonomy" id="290400"/>
    <lineage>
        <taxon>Bacteria</taxon>
        <taxon>Pseudomonadati</taxon>
        <taxon>Pseudomonadota</taxon>
        <taxon>Alphaproteobacteria</taxon>
        <taxon>Rhodobacterales</taxon>
        <taxon>Roseobacteraceae</taxon>
        <taxon>Jannaschia</taxon>
    </lineage>
</organism>
<comment type="function">
    <text evidence="1">Could be involved in insertion of integral membrane proteins into the membrane.</text>
</comment>
<comment type="subcellular location">
    <subcellularLocation>
        <location evidence="1">Cell inner membrane</location>
        <topology evidence="1">Peripheral membrane protein</topology>
        <orientation evidence="1">Cytoplasmic side</orientation>
    </subcellularLocation>
</comment>
<comment type="similarity">
    <text evidence="1">Belongs to the UPF0161 family.</text>
</comment>
<gene>
    <name type="ordered locus">Jann_0640</name>
</gene>
<sequence length="73" mass="8094">MNPAAFLISLPIRFYRLVISPMIASNCRYTPTCSSYAMEALRKHGAIKGTWLAARRVSRCHPWGGSGIDNVPD</sequence>